<feature type="transit peptide" description="Mitochondrion" evidence="1">
    <location>
        <begin position="1"/>
        <end position="24"/>
    </location>
</feature>
<feature type="chain" id="PRO_0000032867" description="Superoxide dismutase [Mn], mitochondrial">
    <location>
        <begin position="25"/>
        <end position="211" status="greater than"/>
    </location>
</feature>
<feature type="binding site" evidence="1">
    <location>
        <position position="50"/>
    </location>
    <ligand>
        <name>Mn(2+)</name>
        <dbReference type="ChEBI" id="CHEBI:29035"/>
    </ligand>
</feature>
<feature type="binding site" evidence="1">
    <location>
        <position position="98"/>
    </location>
    <ligand>
        <name>Mn(2+)</name>
        <dbReference type="ChEBI" id="CHEBI:29035"/>
    </ligand>
</feature>
<feature type="binding site" evidence="1">
    <location>
        <position position="183"/>
    </location>
    <ligand>
        <name>Mn(2+)</name>
        <dbReference type="ChEBI" id="CHEBI:29035"/>
    </ligand>
</feature>
<feature type="binding site" evidence="1">
    <location>
        <position position="187"/>
    </location>
    <ligand>
        <name>Mn(2+)</name>
        <dbReference type="ChEBI" id="CHEBI:29035"/>
    </ligand>
</feature>
<feature type="modified residue" description="3'-nitrotyrosine" evidence="2">
    <location>
        <position position="58"/>
    </location>
</feature>
<feature type="modified residue" description="N6-acetyllysine; alternate" evidence="2">
    <location>
        <position position="68"/>
    </location>
</feature>
<feature type="modified residue" description="N6-succinyllysine; alternate" evidence="4">
    <location>
        <position position="68"/>
    </location>
</feature>
<feature type="modified residue" description="N6-acetyllysine; alternate" evidence="4">
    <location>
        <position position="75"/>
    </location>
</feature>
<feature type="modified residue" description="N6-succinyllysine; alternate" evidence="4">
    <location>
        <position position="75"/>
    </location>
</feature>
<feature type="modified residue" description="N6-acetyllysine" evidence="4">
    <location>
        <position position="114"/>
    </location>
</feature>
<feature type="modified residue" description="N6-acetyllysine; alternate" evidence="4">
    <location>
        <position position="122"/>
    </location>
</feature>
<feature type="modified residue" description="N6-succinyllysine; alternate" evidence="4">
    <location>
        <position position="122"/>
    </location>
</feature>
<feature type="modified residue" description="N6-acetyllysine; alternate" evidence="2">
    <location>
        <position position="130"/>
    </location>
</feature>
<feature type="modified residue" description="N6-succinyllysine; alternate" evidence="4">
    <location>
        <position position="130"/>
    </location>
</feature>
<feature type="modified residue" description="N6-acetyllysine" evidence="4">
    <location>
        <position position="202"/>
    </location>
</feature>
<feature type="non-terminal residue">
    <location>
        <position position="211"/>
    </location>
</feature>
<accession>P49114</accession>
<reference key="1">
    <citation type="journal article" date="1996" name="Biochim. Biophys. Acta">
        <title>Differential patterns of antioxidant enzyme mRNA expression in guinea pig lung and liver during development.</title>
        <authorList>
            <person name="Yuan H.T."/>
            <person name="Bingle C.D."/>
            <person name="Kelly F.J."/>
        </authorList>
    </citation>
    <scope>NUCLEOTIDE SEQUENCE [MRNA]</scope>
    <source>
        <strain>Hartley</strain>
        <tissue>Lung</tissue>
    </source>
</reference>
<sequence>MLCRAVCSASRRLAPALGILGVRQKHSLPDLPYDYGALQPHINAEIMQLHHSKHHAAYLNNLNIAEEKYQEALAKGDVTAQVALQPALKFNGGGHINHSIFWTNLSPNGGGEPKGELLEAIKRDFGSFDKFKEKLTAVSVGVQGSGWGWLGFNKERGCLQIAACSNQDPLQGTTGLIPLLGIDVWEHAYYLQLKNVRPDYLKAIWKVIKNS</sequence>
<dbReference type="EC" id="1.15.1.1"/>
<dbReference type="EMBL" id="U39843">
    <property type="protein sequence ID" value="AAC52719.1"/>
    <property type="molecule type" value="mRNA"/>
</dbReference>
<dbReference type="PIR" id="S65795">
    <property type="entry name" value="S65795"/>
</dbReference>
<dbReference type="SMR" id="P49114"/>
<dbReference type="STRING" id="10141.ENSCPOP00000021485"/>
<dbReference type="eggNOG" id="KOG0876">
    <property type="taxonomic scope" value="Eukaryota"/>
</dbReference>
<dbReference type="InParanoid" id="P49114"/>
<dbReference type="Proteomes" id="UP000005447">
    <property type="component" value="Unassembled WGS sequence"/>
</dbReference>
<dbReference type="GO" id="GO:0005759">
    <property type="term" value="C:mitochondrial matrix"/>
    <property type="evidence" value="ECO:0007669"/>
    <property type="project" value="UniProtKB-SubCell"/>
</dbReference>
<dbReference type="GO" id="GO:0030145">
    <property type="term" value="F:manganese ion binding"/>
    <property type="evidence" value="ECO:0000250"/>
    <property type="project" value="UniProtKB"/>
</dbReference>
<dbReference type="GO" id="GO:0004784">
    <property type="term" value="F:superoxide dismutase activity"/>
    <property type="evidence" value="ECO:0000250"/>
    <property type="project" value="UniProtKB"/>
</dbReference>
<dbReference type="GO" id="GO:0034599">
    <property type="term" value="P:cellular response to oxidative stress"/>
    <property type="evidence" value="ECO:0000250"/>
    <property type="project" value="UniProtKB"/>
</dbReference>
<dbReference type="GO" id="GO:0006357">
    <property type="term" value="P:regulation of transcription by RNA polymerase II"/>
    <property type="evidence" value="ECO:0000250"/>
    <property type="project" value="UniProtKB"/>
</dbReference>
<dbReference type="FunFam" id="1.10.287.990:FF:000001">
    <property type="entry name" value="Superoxide dismutase"/>
    <property type="match status" value="1"/>
</dbReference>
<dbReference type="FunFam" id="3.55.40.20:FF:000003">
    <property type="entry name" value="Superoxide dismutase [Mn], mitochondrial"/>
    <property type="match status" value="1"/>
</dbReference>
<dbReference type="Gene3D" id="1.10.287.990">
    <property type="entry name" value="Fe,Mn superoxide dismutase (SOD) domain"/>
    <property type="match status" value="1"/>
</dbReference>
<dbReference type="Gene3D" id="3.55.40.20">
    <property type="entry name" value="Iron/manganese superoxide dismutase, C-terminal domain"/>
    <property type="match status" value="1"/>
</dbReference>
<dbReference type="InterPro" id="IPR050265">
    <property type="entry name" value="Fe/Mn_Superoxide_Dismutase"/>
</dbReference>
<dbReference type="InterPro" id="IPR001189">
    <property type="entry name" value="Mn/Fe_SOD"/>
</dbReference>
<dbReference type="InterPro" id="IPR019833">
    <property type="entry name" value="Mn/Fe_SOD_BS"/>
</dbReference>
<dbReference type="InterPro" id="IPR019832">
    <property type="entry name" value="Mn/Fe_SOD_C"/>
</dbReference>
<dbReference type="InterPro" id="IPR019831">
    <property type="entry name" value="Mn/Fe_SOD_N"/>
</dbReference>
<dbReference type="InterPro" id="IPR036324">
    <property type="entry name" value="Mn/Fe_SOD_N_sf"/>
</dbReference>
<dbReference type="InterPro" id="IPR036314">
    <property type="entry name" value="SOD_C_sf"/>
</dbReference>
<dbReference type="PANTHER" id="PTHR11404">
    <property type="entry name" value="SUPEROXIDE DISMUTASE 2"/>
    <property type="match status" value="1"/>
</dbReference>
<dbReference type="PANTHER" id="PTHR11404:SF6">
    <property type="entry name" value="SUPEROXIDE DISMUTASE [MN], MITOCHONDRIAL"/>
    <property type="match status" value="1"/>
</dbReference>
<dbReference type="Pfam" id="PF02777">
    <property type="entry name" value="Sod_Fe_C"/>
    <property type="match status" value="1"/>
</dbReference>
<dbReference type="Pfam" id="PF00081">
    <property type="entry name" value="Sod_Fe_N"/>
    <property type="match status" value="1"/>
</dbReference>
<dbReference type="PIRSF" id="PIRSF000349">
    <property type="entry name" value="SODismutase"/>
    <property type="match status" value="1"/>
</dbReference>
<dbReference type="PRINTS" id="PR01703">
    <property type="entry name" value="MNSODISMTASE"/>
</dbReference>
<dbReference type="SUPFAM" id="SSF54719">
    <property type="entry name" value="Fe,Mn superoxide dismutase (SOD), C-terminal domain"/>
    <property type="match status" value="1"/>
</dbReference>
<dbReference type="SUPFAM" id="SSF46609">
    <property type="entry name" value="Fe,Mn superoxide dismutase (SOD), N-terminal domain"/>
    <property type="match status" value="1"/>
</dbReference>
<dbReference type="PROSITE" id="PS00088">
    <property type="entry name" value="SOD_MN"/>
    <property type="match status" value="1"/>
</dbReference>
<organism>
    <name type="scientific">Cavia porcellus</name>
    <name type="common">Guinea pig</name>
    <dbReference type="NCBI Taxonomy" id="10141"/>
    <lineage>
        <taxon>Eukaryota</taxon>
        <taxon>Metazoa</taxon>
        <taxon>Chordata</taxon>
        <taxon>Craniata</taxon>
        <taxon>Vertebrata</taxon>
        <taxon>Euteleostomi</taxon>
        <taxon>Mammalia</taxon>
        <taxon>Eutheria</taxon>
        <taxon>Euarchontoglires</taxon>
        <taxon>Glires</taxon>
        <taxon>Rodentia</taxon>
        <taxon>Hystricomorpha</taxon>
        <taxon>Caviidae</taxon>
        <taxon>Cavia</taxon>
    </lineage>
</organism>
<proteinExistence type="evidence at transcript level"/>
<comment type="function">
    <text evidence="3">Destroys superoxide anion radicals which are normally produced within the cells and which are toxic to biological systems.</text>
</comment>
<comment type="catalytic activity">
    <reaction>
        <text>2 superoxide + 2 H(+) = H2O2 + O2</text>
        <dbReference type="Rhea" id="RHEA:20696"/>
        <dbReference type="ChEBI" id="CHEBI:15378"/>
        <dbReference type="ChEBI" id="CHEBI:15379"/>
        <dbReference type="ChEBI" id="CHEBI:16240"/>
        <dbReference type="ChEBI" id="CHEBI:18421"/>
        <dbReference type="EC" id="1.15.1.1"/>
    </reaction>
</comment>
<comment type="cofactor">
    <cofactor evidence="2">
        <name>Mn(2+)</name>
        <dbReference type="ChEBI" id="CHEBI:29035"/>
    </cofactor>
    <text evidence="2">Binds 1 Mn(2+) ion per subunit.</text>
</comment>
<comment type="subunit">
    <text evidence="1">Homotetramer.</text>
</comment>
<comment type="subcellular location">
    <subcellularLocation>
        <location>Mitochondrion matrix</location>
    </subcellularLocation>
</comment>
<comment type="PTM">
    <text evidence="3">Nitrated under oxidative stress. Nitration coupled with oxidation inhibits the catalytic activity.</text>
</comment>
<comment type="PTM">
    <text evidence="2">Acetylation at Lys-122 decreases enzymatic activity. Deacetylated by SIRT3 upon exposure to ionizing radiations or after long fasting (By similarity).</text>
</comment>
<comment type="PTM">
    <text evidence="2">Polyubiquitinated; leading to proteasomal degradation. Deubiquitinated by USP36 which increases protein stability.</text>
</comment>
<comment type="similarity">
    <text evidence="5">Belongs to the iron/manganese superoxide dismutase family.</text>
</comment>
<gene>
    <name type="primary">SOD2</name>
</gene>
<evidence type="ECO:0000250" key="1"/>
<evidence type="ECO:0000250" key="2">
    <source>
        <dbReference type="UniProtKB" id="P04179"/>
    </source>
</evidence>
<evidence type="ECO:0000250" key="3">
    <source>
        <dbReference type="UniProtKB" id="P07895"/>
    </source>
</evidence>
<evidence type="ECO:0000250" key="4">
    <source>
        <dbReference type="UniProtKB" id="P09671"/>
    </source>
</evidence>
<evidence type="ECO:0000305" key="5"/>
<keyword id="KW-0007">Acetylation</keyword>
<keyword id="KW-0464">Manganese</keyword>
<keyword id="KW-0479">Metal-binding</keyword>
<keyword id="KW-0496">Mitochondrion</keyword>
<keyword id="KW-0944">Nitration</keyword>
<keyword id="KW-0560">Oxidoreductase</keyword>
<keyword id="KW-1185">Reference proteome</keyword>
<keyword id="KW-0809">Transit peptide</keyword>
<keyword id="KW-0832">Ubl conjugation</keyword>
<name>SODM_CAVPO</name>
<protein>
    <recommendedName>
        <fullName>Superoxide dismutase [Mn], mitochondrial</fullName>
        <ecNumber>1.15.1.1</ecNumber>
    </recommendedName>
</protein>